<accession>Q8DMM6</accession>
<sequence length="122" mass="13627">MVSTSSPTARACAKYVRMSPHKVRRVLDQLRGRTYRDALIMLRFMPYRACEPITKVLRSAAANATHNLGLDPATLVISQAYADQGPCLKRFRPRAQGRAYQIRKPTCHITIAVAPQNTADES</sequence>
<evidence type="ECO:0000255" key="1">
    <source>
        <dbReference type="HAMAP-Rule" id="MF_01331"/>
    </source>
</evidence>
<evidence type="ECO:0000305" key="2"/>
<comment type="function">
    <text evidence="1">This protein binds specifically to 23S rRNA; its binding is stimulated by other ribosomal proteins, e.g. L4, L17, and L20. It is important during the early stages of 50S assembly. It makes multiple contacts with different domains of the 23S rRNA in the assembled 50S subunit and ribosome (By similarity).</text>
</comment>
<comment type="function">
    <text evidence="1">The globular domain of the protein is located near the polypeptide exit tunnel on the outside of the subunit, while an extended beta-hairpin is found that lines the wall of the exit tunnel in the center of the 70S ribosome.</text>
</comment>
<comment type="subunit">
    <text evidence="1">Part of the 50S ribosomal subunit.</text>
</comment>
<comment type="similarity">
    <text evidence="1">Belongs to the universal ribosomal protein uL22 family.</text>
</comment>
<keyword id="KW-1185">Reference proteome</keyword>
<keyword id="KW-0687">Ribonucleoprotein</keyword>
<keyword id="KW-0689">Ribosomal protein</keyword>
<keyword id="KW-0694">RNA-binding</keyword>
<keyword id="KW-0699">rRNA-binding</keyword>
<proteinExistence type="inferred from homology"/>
<dbReference type="EMBL" id="BA000039">
    <property type="protein sequence ID" value="BAC07639.1"/>
    <property type="molecule type" value="Genomic_DNA"/>
</dbReference>
<dbReference type="RefSeq" id="NP_680877.1">
    <property type="nucleotide sequence ID" value="NC_004113.1"/>
</dbReference>
<dbReference type="RefSeq" id="WP_011055941.1">
    <property type="nucleotide sequence ID" value="NC_004113.1"/>
</dbReference>
<dbReference type="SMR" id="Q8DMM6"/>
<dbReference type="STRING" id="197221.gene:10746664"/>
<dbReference type="EnsemblBacteria" id="BAC07639">
    <property type="protein sequence ID" value="BAC07639"/>
    <property type="gene ID" value="BAC07639"/>
</dbReference>
<dbReference type="KEGG" id="tel:tlr0086"/>
<dbReference type="PATRIC" id="fig|197221.4.peg.89"/>
<dbReference type="eggNOG" id="COG0091">
    <property type="taxonomic scope" value="Bacteria"/>
</dbReference>
<dbReference type="Proteomes" id="UP000000440">
    <property type="component" value="Chromosome"/>
</dbReference>
<dbReference type="GO" id="GO:0022625">
    <property type="term" value="C:cytosolic large ribosomal subunit"/>
    <property type="evidence" value="ECO:0007669"/>
    <property type="project" value="TreeGrafter"/>
</dbReference>
<dbReference type="GO" id="GO:0019843">
    <property type="term" value="F:rRNA binding"/>
    <property type="evidence" value="ECO:0007669"/>
    <property type="project" value="UniProtKB-UniRule"/>
</dbReference>
<dbReference type="GO" id="GO:0003735">
    <property type="term" value="F:structural constituent of ribosome"/>
    <property type="evidence" value="ECO:0007669"/>
    <property type="project" value="InterPro"/>
</dbReference>
<dbReference type="GO" id="GO:0006412">
    <property type="term" value="P:translation"/>
    <property type="evidence" value="ECO:0007669"/>
    <property type="project" value="UniProtKB-UniRule"/>
</dbReference>
<dbReference type="CDD" id="cd00336">
    <property type="entry name" value="Ribosomal_L22"/>
    <property type="match status" value="1"/>
</dbReference>
<dbReference type="Gene3D" id="3.90.470.10">
    <property type="entry name" value="Ribosomal protein L22/L17"/>
    <property type="match status" value="1"/>
</dbReference>
<dbReference type="HAMAP" id="MF_01331_B">
    <property type="entry name" value="Ribosomal_uL22_B"/>
    <property type="match status" value="1"/>
</dbReference>
<dbReference type="InterPro" id="IPR001063">
    <property type="entry name" value="Ribosomal_uL22"/>
</dbReference>
<dbReference type="InterPro" id="IPR005727">
    <property type="entry name" value="Ribosomal_uL22_bac/chlpt-type"/>
</dbReference>
<dbReference type="InterPro" id="IPR047867">
    <property type="entry name" value="Ribosomal_uL22_bac/org-type"/>
</dbReference>
<dbReference type="InterPro" id="IPR018260">
    <property type="entry name" value="Ribosomal_uL22_CS"/>
</dbReference>
<dbReference type="InterPro" id="IPR036394">
    <property type="entry name" value="Ribosomal_uL22_sf"/>
</dbReference>
<dbReference type="NCBIfam" id="TIGR01044">
    <property type="entry name" value="rplV_bact"/>
    <property type="match status" value="1"/>
</dbReference>
<dbReference type="PANTHER" id="PTHR13501">
    <property type="entry name" value="CHLOROPLAST 50S RIBOSOMAL PROTEIN L22-RELATED"/>
    <property type="match status" value="1"/>
</dbReference>
<dbReference type="PANTHER" id="PTHR13501:SF8">
    <property type="entry name" value="LARGE RIBOSOMAL SUBUNIT PROTEIN UL22M"/>
    <property type="match status" value="1"/>
</dbReference>
<dbReference type="Pfam" id="PF00237">
    <property type="entry name" value="Ribosomal_L22"/>
    <property type="match status" value="1"/>
</dbReference>
<dbReference type="SUPFAM" id="SSF54843">
    <property type="entry name" value="Ribosomal protein L22"/>
    <property type="match status" value="1"/>
</dbReference>
<dbReference type="PROSITE" id="PS00464">
    <property type="entry name" value="RIBOSOMAL_L22"/>
    <property type="match status" value="1"/>
</dbReference>
<name>RL22_THEVB</name>
<gene>
    <name evidence="1" type="primary">rplV</name>
    <name evidence="1" type="synonym">rpl22</name>
    <name type="ordered locus">tlr0086</name>
</gene>
<feature type="chain" id="PRO_0000125243" description="Large ribosomal subunit protein uL22">
    <location>
        <begin position="1"/>
        <end position="122"/>
    </location>
</feature>
<organism>
    <name type="scientific">Thermosynechococcus vestitus (strain NIES-2133 / IAM M-273 / BP-1)</name>
    <dbReference type="NCBI Taxonomy" id="197221"/>
    <lineage>
        <taxon>Bacteria</taxon>
        <taxon>Bacillati</taxon>
        <taxon>Cyanobacteriota</taxon>
        <taxon>Cyanophyceae</taxon>
        <taxon>Acaryochloridales</taxon>
        <taxon>Thermosynechococcaceae</taxon>
        <taxon>Thermosynechococcus</taxon>
    </lineage>
</organism>
<protein>
    <recommendedName>
        <fullName evidence="1">Large ribosomal subunit protein uL22</fullName>
    </recommendedName>
    <alternativeName>
        <fullName evidence="2">50S ribosomal protein L22</fullName>
    </alternativeName>
</protein>
<reference key="1">
    <citation type="journal article" date="2002" name="DNA Res.">
        <title>Complete genome structure of the thermophilic cyanobacterium Thermosynechococcus elongatus BP-1.</title>
        <authorList>
            <person name="Nakamura Y."/>
            <person name="Kaneko T."/>
            <person name="Sato S."/>
            <person name="Ikeuchi M."/>
            <person name="Katoh H."/>
            <person name="Sasamoto S."/>
            <person name="Watanabe A."/>
            <person name="Iriguchi M."/>
            <person name="Kawashima K."/>
            <person name="Kimura T."/>
            <person name="Kishida Y."/>
            <person name="Kiyokawa C."/>
            <person name="Kohara M."/>
            <person name="Matsumoto M."/>
            <person name="Matsuno A."/>
            <person name="Nakazaki N."/>
            <person name="Shimpo S."/>
            <person name="Sugimoto M."/>
            <person name="Takeuchi C."/>
            <person name="Yamada M."/>
            <person name="Tabata S."/>
        </authorList>
    </citation>
    <scope>NUCLEOTIDE SEQUENCE [LARGE SCALE GENOMIC DNA]</scope>
    <source>
        <strain>NIES-2133 / IAM M-273 / BP-1</strain>
    </source>
</reference>